<feature type="chain" id="PRO_0000225952" description="Chaperone protein DnaK 2">
    <location>
        <begin position="1"/>
        <end position="638"/>
    </location>
</feature>
<feature type="region of interest" description="Disordered" evidence="2">
    <location>
        <begin position="604"/>
        <end position="626"/>
    </location>
</feature>
<feature type="compositionally biased region" description="Low complexity" evidence="2">
    <location>
        <begin position="613"/>
        <end position="624"/>
    </location>
</feature>
<feature type="modified residue" description="Phosphothreonine; by autocatalysis" evidence="1">
    <location>
        <position position="199"/>
    </location>
</feature>
<evidence type="ECO:0000255" key="1">
    <source>
        <dbReference type="HAMAP-Rule" id="MF_00332"/>
    </source>
</evidence>
<evidence type="ECO:0000256" key="2">
    <source>
        <dbReference type="SAM" id="MobiDB-lite"/>
    </source>
</evidence>
<gene>
    <name evidence="1" type="primary">dnaK2</name>
    <name type="ordered locus">CPS_3821</name>
</gene>
<proteinExistence type="inferred from homology"/>
<protein>
    <recommendedName>
        <fullName evidence="1">Chaperone protein DnaK 2</fullName>
    </recommendedName>
    <alternativeName>
        <fullName evidence="1">HSP70 2</fullName>
    </alternativeName>
    <alternativeName>
        <fullName evidence="1">Heat shock 70 kDa protein 2</fullName>
    </alternativeName>
    <alternativeName>
        <fullName evidence="1">Heat shock protein 70 2</fullName>
    </alternativeName>
</protein>
<reference key="1">
    <citation type="journal article" date="2005" name="Proc. Natl. Acad. Sci. U.S.A.">
        <title>The psychrophilic lifestyle as revealed by the genome sequence of Colwellia psychrerythraea 34H through genomic and proteomic analyses.</title>
        <authorList>
            <person name="Methe B.A."/>
            <person name="Nelson K.E."/>
            <person name="Deming J.W."/>
            <person name="Momen B."/>
            <person name="Melamud E."/>
            <person name="Zhang X."/>
            <person name="Moult J."/>
            <person name="Madupu R."/>
            <person name="Nelson W.C."/>
            <person name="Dodson R.J."/>
            <person name="Brinkac L.M."/>
            <person name="Daugherty S.C."/>
            <person name="Durkin A.S."/>
            <person name="DeBoy R.T."/>
            <person name="Kolonay J.F."/>
            <person name="Sullivan S.A."/>
            <person name="Zhou L."/>
            <person name="Davidsen T.M."/>
            <person name="Wu M."/>
            <person name="Huston A.L."/>
            <person name="Lewis M."/>
            <person name="Weaver B."/>
            <person name="Weidman J.F."/>
            <person name="Khouri H."/>
            <person name="Utterback T.R."/>
            <person name="Feldblyum T.V."/>
            <person name="Fraser C.M."/>
        </authorList>
    </citation>
    <scope>NUCLEOTIDE SEQUENCE [LARGE SCALE GENOMIC DNA]</scope>
    <source>
        <strain>34H / ATCC BAA-681</strain>
    </source>
</reference>
<accession>Q47XI6</accession>
<organism>
    <name type="scientific">Colwellia psychrerythraea (strain 34H / ATCC BAA-681)</name>
    <name type="common">Vibrio psychroerythus</name>
    <dbReference type="NCBI Taxonomy" id="167879"/>
    <lineage>
        <taxon>Bacteria</taxon>
        <taxon>Pseudomonadati</taxon>
        <taxon>Pseudomonadota</taxon>
        <taxon>Gammaproteobacteria</taxon>
        <taxon>Alteromonadales</taxon>
        <taxon>Colwelliaceae</taxon>
        <taxon>Colwellia</taxon>
    </lineage>
</organism>
<comment type="function">
    <text evidence="1">Acts as a chaperone.</text>
</comment>
<comment type="induction">
    <text evidence="1">By stress conditions e.g. heat shock.</text>
</comment>
<comment type="similarity">
    <text evidence="1">Belongs to the heat shock protein 70 family.</text>
</comment>
<sequence length="638" mass="68766">MGKIIGIDLGTTNSCVAVLDGDSVRVIENAEGDRTTPSIIGYTAEGETLVGQPAKRQSVTNPENTLYAIKRLIGRRFEDKETQRDIDIMPFGIVKADNGDAWVQVKGEKIAPPQVSAEVLKKMKKTAEDFLGETVTEAVITVPAYFNDSQRQATKDAGRIAGLEVKRIINEPTAAALAYGMDKQEGDKVVAVYDLGGGTFDISIIEIDEMDGEHTFEVLATNGDTHLGGEDFDNRLINYLVAEFKKDQGMDLTSDPLAMQRLKEAAEKAKCELSSAQQTDVNLPYITADGSGPKHMNIKVTRAKLESLVEDMVKATLEPLKQALKDADLSVSKIDDVILVGGQSRMPLVQKTVTDFFGKEPRKDVNPDEAVASGAAIQAGVLSGDVTDVLLLDVTPLSLGIETMGGVMTKVIDKNTTIPTKQSQTFSTADDNQAAVTVHVCQGERKQASANKSLGQFNLEGIEPAQRGTPQIEVTFDIDADGILHVTAKDKNTGKEQKITIKASSGLSDEEVEQMVRDAEANADADAKFEELVTARNQADGMIHATRKQVEEAGEELPSEDKEKIEAALTELEEAVKGDDKEVIEAKTQALMEASAKLMEIAQAKEQAQSAPEGAQEADAAPADDVVDAEFEEVKDDK</sequence>
<keyword id="KW-0067">ATP-binding</keyword>
<keyword id="KW-0143">Chaperone</keyword>
<keyword id="KW-0547">Nucleotide-binding</keyword>
<keyword id="KW-0597">Phosphoprotein</keyword>
<keyword id="KW-0346">Stress response</keyword>
<dbReference type="EMBL" id="CP000083">
    <property type="protein sequence ID" value="AAZ27124.1"/>
    <property type="molecule type" value="Genomic_DNA"/>
</dbReference>
<dbReference type="SMR" id="Q47XI6"/>
<dbReference type="STRING" id="167879.CPS_3821"/>
<dbReference type="KEGG" id="cps:CPS_3821"/>
<dbReference type="eggNOG" id="COG0443">
    <property type="taxonomic scope" value="Bacteria"/>
</dbReference>
<dbReference type="HOGENOM" id="CLU_005965_2_1_6"/>
<dbReference type="Proteomes" id="UP000000547">
    <property type="component" value="Chromosome"/>
</dbReference>
<dbReference type="GO" id="GO:0005524">
    <property type="term" value="F:ATP binding"/>
    <property type="evidence" value="ECO:0007669"/>
    <property type="project" value="UniProtKB-UniRule"/>
</dbReference>
<dbReference type="GO" id="GO:0140662">
    <property type="term" value="F:ATP-dependent protein folding chaperone"/>
    <property type="evidence" value="ECO:0007669"/>
    <property type="project" value="InterPro"/>
</dbReference>
<dbReference type="GO" id="GO:0051082">
    <property type="term" value="F:unfolded protein binding"/>
    <property type="evidence" value="ECO:0007669"/>
    <property type="project" value="InterPro"/>
</dbReference>
<dbReference type="FunFam" id="2.60.34.10:FF:000014">
    <property type="entry name" value="Chaperone protein DnaK HSP70"/>
    <property type="match status" value="1"/>
</dbReference>
<dbReference type="FunFam" id="3.30.30.30:FF:000003">
    <property type="entry name" value="Heat shock protein 9"/>
    <property type="match status" value="1"/>
</dbReference>
<dbReference type="FunFam" id="1.20.1270.10:FF:000001">
    <property type="entry name" value="Molecular chaperone DnaK"/>
    <property type="match status" value="1"/>
</dbReference>
<dbReference type="FunFam" id="3.30.420.40:FF:000004">
    <property type="entry name" value="Molecular chaperone DnaK"/>
    <property type="match status" value="1"/>
</dbReference>
<dbReference type="FunFam" id="3.90.640.10:FF:000003">
    <property type="entry name" value="Molecular chaperone DnaK"/>
    <property type="match status" value="1"/>
</dbReference>
<dbReference type="Gene3D" id="1.20.1270.10">
    <property type="match status" value="1"/>
</dbReference>
<dbReference type="Gene3D" id="3.30.420.40">
    <property type="match status" value="2"/>
</dbReference>
<dbReference type="Gene3D" id="3.90.640.10">
    <property type="entry name" value="Actin, Chain A, domain 4"/>
    <property type="match status" value="1"/>
</dbReference>
<dbReference type="Gene3D" id="2.60.34.10">
    <property type="entry name" value="Substrate Binding Domain Of DNAk, Chain A, domain 1"/>
    <property type="match status" value="1"/>
</dbReference>
<dbReference type="HAMAP" id="MF_00332">
    <property type="entry name" value="DnaK"/>
    <property type="match status" value="1"/>
</dbReference>
<dbReference type="InterPro" id="IPR043129">
    <property type="entry name" value="ATPase_NBD"/>
</dbReference>
<dbReference type="InterPro" id="IPR012725">
    <property type="entry name" value="Chaperone_DnaK"/>
</dbReference>
<dbReference type="InterPro" id="IPR018181">
    <property type="entry name" value="Heat_shock_70_CS"/>
</dbReference>
<dbReference type="InterPro" id="IPR029048">
    <property type="entry name" value="HSP70_C_sf"/>
</dbReference>
<dbReference type="InterPro" id="IPR029047">
    <property type="entry name" value="HSP70_peptide-bd_sf"/>
</dbReference>
<dbReference type="InterPro" id="IPR013126">
    <property type="entry name" value="Hsp_70_fam"/>
</dbReference>
<dbReference type="NCBIfam" id="NF001413">
    <property type="entry name" value="PRK00290.1"/>
    <property type="match status" value="1"/>
</dbReference>
<dbReference type="NCBIfam" id="NF003520">
    <property type="entry name" value="PRK05183.1"/>
    <property type="match status" value="1"/>
</dbReference>
<dbReference type="NCBIfam" id="TIGR02350">
    <property type="entry name" value="prok_dnaK"/>
    <property type="match status" value="1"/>
</dbReference>
<dbReference type="PANTHER" id="PTHR19375">
    <property type="entry name" value="HEAT SHOCK PROTEIN 70KDA"/>
    <property type="match status" value="1"/>
</dbReference>
<dbReference type="Pfam" id="PF00012">
    <property type="entry name" value="HSP70"/>
    <property type="match status" value="1"/>
</dbReference>
<dbReference type="PRINTS" id="PR00301">
    <property type="entry name" value="HEATSHOCK70"/>
</dbReference>
<dbReference type="SUPFAM" id="SSF53067">
    <property type="entry name" value="Actin-like ATPase domain"/>
    <property type="match status" value="2"/>
</dbReference>
<dbReference type="SUPFAM" id="SSF100934">
    <property type="entry name" value="Heat shock protein 70kD (HSP70), C-terminal subdomain"/>
    <property type="match status" value="1"/>
</dbReference>
<dbReference type="SUPFAM" id="SSF100920">
    <property type="entry name" value="Heat shock protein 70kD (HSP70), peptide-binding domain"/>
    <property type="match status" value="1"/>
</dbReference>
<dbReference type="PROSITE" id="PS00297">
    <property type="entry name" value="HSP70_1"/>
    <property type="match status" value="1"/>
</dbReference>
<dbReference type="PROSITE" id="PS00329">
    <property type="entry name" value="HSP70_2"/>
    <property type="match status" value="1"/>
</dbReference>
<dbReference type="PROSITE" id="PS01036">
    <property type="entry name" value="HSP70_3"/>
    <property type="match status" value="1"/>
</dbReference>
<name>DNAK2_COLP3</name>